<evidence type="ECO:0000255" key="1">
    <source>
        <dbReference type="HAMAP-Rule" id="MF_00115"/>
    </source>
</evidence>
<accession>A7GXI2</accession>
<sequence>MSFIGEFKEFAMKGNVLDMAVGVVIGTAFGKIVSSLVGDIIMPIVGVITGGVNFTDLKITLKDAAQGVPAVTINYGNFIQTAVDFLIIAFCIFCVIKAINSLKRKPAEPEVAQPAAPAEDIVLLTQIRDLLKK</sequence>
<proteinExistence type="inferred from homology"/>
<keyword id="KW-0997">Cell inner membrane</keyword>
<keyword id="KW-1003">Cell membrane</keyword>
<keyword id="KW-0407">Ion channel</keyword>
<keyword id="KW-0406">Ion transport</keyword>
<keyword id="KW-0472">Membrane</keyword>
<keyword id="KW-1185">Reference proteome</keyword>
<keyword id="KW-0812">Transmembrane</keyword>
<keyword id="KW-1133">Transmembrane helix</keyword>
<keyword id="KW-0813">Transport</keyword>
<dbReference type="EMBL" id="CP000767">
    <property type="protein sequence ID" value="EAU00790.1"/>
    <property type="molecule type" value="Genomic_DNA"/>
</dbReference>
<dbReference type="RefSeq" id="WP_011992071.1">
    <property type="nucleotide sequence ID" value="NC_009715.2"/>
</dbReference>
<dbReference type="SMR" id="A7GXI2"/>
<dbReference type="STRING" id="360105.CCV52592_0437"/>
<dbReference type="KEGG" id="ccv:CCV52592_0437"/>
<dbReference type="HOGENOM" id="CLU_095787_0_0_7"/>
<dbReference type="OrthoDB" id="9810350at2"/>
<dbReference type="Proteomes" id="UP000006380">
    <property type="component" value="Chromosome"/>
</dbReference>
<dbReference type="GO" id="GO:0005886">
    <property type="term" value="C:plasma membrane"/>
    <property type="evidence" value="ECO:0007669"/>
    <property type="project" value="UniProtKB-SubCell"/>
</dbReference>
<dbReference type="GO" id="GO:0008381">
    <property type="term" value="F:mechanosensitive monoatomic ion channel activity"/>
    <property type="evidence" value="ECO:0007669"/>
    <property type="project" value="UniProtKB-UniRule"/>
</dbReference>
<dbReference type="FunFam" id="1.10.1200.120:FF:000001">
    <property type="entry name" value="Large-conductance mechanosensitive channel"/>
    <property type="match status" value="1"/>
</dbReference>
<dbReference type="Gene3D" id="1.10.1200.120">
    <property type="entry name" value="Large-conductance mechanosensitive channel, MscL, domain 1"/>
    <property type="match status" value="1"/>
</dbReference>
<dbReference type="HAMAP" id="MF_00115">
    <property type="entry name" value="MscL"/>
    <property type="match status" value="1"/>
</dbReference>
<dbReference type="InterPro" id="IPR019823">
    <property type="entry name" value="Mechanosensitive_channel_CS"/>
</dbReference>
<dbReference type="InterPro" id="IPR001185">
    <property type="entry name" value="MS_channel"/>
</dbReference>
<dbReference type="InterPro" id="IPR037673">
    <property type="entry name" value="MSC/AndL"/>
</dbReference>
<dbReference type="InterPro" id="IPR036019">
    <property type="entry name" value="MscL_channel"/>
</dbReference>
<dbReference type="NCBIfam" id="TIGR00220">
    <property type="entry name" value="mscL"/>
    <property type="match status" value="1"/>
</dbReference>
<dbReference type="NCBIfam" id="NF001843">
    <property type="entry name" value="PRK00567.1-4"/>
    <property type="match status" value="1"/>
</dbReference>
<dbReference type="PANTHER" id="PTHR30266:SF2">
    <property type="entry name" value="LARGE-CONDUCTANCE MECHANOSENSITIVE CHANNEL"/>
    <property type="match status" value="1"/>
</dbReference>
<dbReference type="PANTHER" id="PTHR30266">
    <property type="entry name" value="MECHANOSENSITIVE CHANNEL MSCL"/>
    <property type="match status" value="1"/>
</dbReference>
<dbReference type="Pfam" id="PF01741">
    <property type="entry name" value="MscL"/>
    <property type="match status" value="1"/>
</dbReference>
<dbReference type="PRINTS" id="PR01264">
    <property type="entry name" value="MECHCHANNEL"/>
</dbReference>
<dbReference type="SUPFAM" id="SSF81330">
    <property type="entry name" value="Gated mechanosensitive channel"/>
    <property type="match status" value="1"/>
</dbReference>
<dbReference type="PROSITE" id="PS01327">
    <property type="entry name" value="MSCL"/>
    <property type="match status" value="1"/>
</dbReference>
<reference key="1">
    <citation type="submission" date="2007-07" db="EMBL/GenBank/DDBJ databases">
        <title>Genome sequence of Campylobacter curvus 525.92 isolated from human feces.</title>
        <authorList>
            <person name="Fouts D.E."/>
            <person name="Mongodin E.F."/>
            <person name="Puiu D."/>
            <person name="Sebastian Y."/>
            <person name="Miller W.G."/>
            <person name="Mandrell R.E."/>
            <person name="Lastovica A.J."/>
            <person name="Nelson K.E."/>
        </authorList>
    </citation>
    <scope>NUCLEOTIDE SEQUENCE [LARGE SCALE GENOMIC DNA]</scope>
    <source>
        <strain>525.92</strain>
    </source>
</reference>
<gene>
    <name evidence="1" type="primary">mscL</name>
    <name type="ordered locus">Ccur92_06200</name>
    <name type="ORF">CCV52592_0437</name>
</gene>
<protein>
    <recommendedName>
        <fullName evidence="1">Large-conductance mechanosensitive channel</fullName>
    </recommendedName>
</protein>
<comment type="function">
    <text evidence="1">Channel that opens in response to stretch forces in the membrane lipid bilayer. May participate in the regulation of osmotic pressure changes within the cell.</text>
</comment>
<comment type="subunit">
    <text evidence="1">Homopentamer.</text>
</comment>
<comment type="subcellular location">
    <subcellularLocation>
        <location evidence="1">Cell inner membrane</location>
        <topology evidence="1">Multi-pass membrane protein</topology>
    </subcellularLocation>
</comment>
<comment type="similarity">
    <text evidence="1">Belongs to the MscL family.</text>
</comment>
<feature type="chain" id="PRO_1000015368" description="Large-conductance mechanosensitive channel">
    <location>
        <begin position="1"/>
        <end position="133"/>
    </location>
</feature>
<feature type="transmembrane region" description="Helical" evidence="1">
    <location>
        <begin position="10"/>
        <end position="30"/>
    </location>
</feature>
<feature type="transmembrane region" description="Helical" evidence="1">
    <location>
        <begin position="76"/>
        <end position="96"/>
    </location>
</feature>
<name>MSCL_CAMC5</name>
<organism>
    <name type="scientific">Campylobacter curvus (strain 525.92)</name>
    <dbReference type="NCBI Taxonomy" id="360105"/>
    <lineage>
        <taxon>Bacteria</taxon>
        <taxon>Pseudomonadati</taxon>
        <taxon>Campylobacterota</taxon>
        <taxon>Epsilonproteobacteria</taxon>
        <taxon>Campylobacterales</taxon>
        <taxon>Campylobacteraceae</taxon>
        <taxon>Campylobacter</taxon>
    </lineage>
</organism>